<keyword id="KW-0002">3D-structure</keyword>
<keyword id="KW-0025">Alternative splicing</keyword>
<keyword id="KW-0106">Calcium</keyword>
<keyword id="KW-0130">Cell adhesion</keyword>
<keyword id="KW-1003">Cell membrane</keyword>
<keyword id="KW-0165">Cleavage on pair of basic residues</keyword>
<keyword id="KW-0325">Glycoprotein</keyword>
<keyword id="KW-0472">Membrane</keyword>
<keyword id="KW-0479">Metal-binding</keyword>
<keyword id="KW-1185">Reference proteome</keyword>
<keyword id="KW-0677">Repeat</keyword>
<keyword id="KW-0732">Signal</keyword>
<keyword id="KW-0812">Transmembrane</keyword>
<keyword id="KW-1133">Transmembrane helix</keyword>
<reference key="1">
    <citation type="journal article" date="2002" name="Cell">
        <title>Regulation of motor neuron pool sorting by differential expression of type II cadherins.</title>
        <authorList>
            <person name="Price S.R."/>
            <person name="De Marco Garcia N.V."/>
            <person name="Ranscht B."/>
            <person name="Jessell T.M."/>
        </authorList>
    </citation>
    <scope>NUCLEOTIDE SEQUENCE [MRNA] (ISOFORM 1)</scope>
    <scope>FUNCTION</scope>
    <scope>TISSUE SPECIFICITY</scope>
    <source>
        <tissue>Embryonic spinal cord</tissue>
    </source>
</reference>
<reference key="2">
    <citation type="journal article" date="2005" name="Biochem. Biophys. Res. Commun.">
        <title>MN-cadherin and its novel variant are transiently expressed in chick embryo spinal cord.</title>
        <authorList>
            <person name="Shirabe K."/>
            <person name="Kimura Y."/>
            <person name="Matsuo N."/>
            <person name="Fukushima M."/>
            <person name="Yoshioka H."/>
            <person name="Tanaka H."/>
        </authorList>
    </citation>
    <scope>NUCLEOTIDE SEQUENCE [MRNA] (ISOFORMS 1 AND 2)</scope>
    <scope>FUNCTION</scope>
    <scope>SUBCELLULAR LOCATION</scope>
    <scope>TISSUE SPECIFICITY</scope>
    <source>
        <strain>White leghorn</strain>
        <tissue>Embryonic spinal cord</tissue>
    </source>
</reference>
<reference key="3">
    <citation type="journal article" date="2006" name="Cell">
        <title>Type II cadherin ectodomain structures: implications for classical cadherin specificity.</title>
        <authorList>
            <person name="Patel S.D."/>
            <person name="Ciatto C."/>
            <person name="Chen C.P."/>
            <person name="Bahna F."/>
            <person name="Rajebhosale M."/>
            <person name="Arkus N."/>
            <person name="Schieren I."/>
            <person name="Jessell T.M."/>
            <person name="Honig B."/>
            <person name="Price S.R."/>
            <person name="Shapiro L."/>
        </authorList>
    </citation>
    <scope>X-RAY CRYSTALLOGRAPHY (2.16 ANGSTROMS) OF 60-156</scope>
    <scope>FUNCTION</scope>
    <scope>SUBUNIT</scope>
</reference>
<name>CAD20_CHICK</name>
<protein>
    <recommendedName>
        <fullName>Cadherin-20</fullName>
    </recommendedName>
    <alternativeName>
        <fullName>F-cadherin</fullName>
    </alternativeName>
    <alternativeName>
        <fullName>MN-cadherin</fullName>
    </alternativeName>
</protein>
<dbReference type="EMBL" id="AF459439">
    <property type="protein sequence ID" value="AAL93123.1"/>
    <property type="molecule type" value="mRNA"/>
</dbReference>
<dbReference type="EMBL" id="AF465257">
    <property type="protein sequence ID" value="AAO33355.1"/>
    <property type="molecule type" value="mRNA"/>
</dbReference>
<dbReference type="EMBL" id="AF465258">
    <property type="protein sequence ID" value="AAO33356.1"/>
    <property type="molecule type" value="mRNA"/>
</dbReference>
<dbReference type="RefSeq" id="NP_989465.1">
    <molecule id="Q8QGH3-1"/>
    <property type="nucleotide sequence ID" value="NM_204134.2"/>
</dbReference>
<dbReference type="RefSeq" id="XP_015137644.1">
    <property type="nucleotide sequence ID" value="XM_015282158.1"/>
</dbReference>
<dbReference type="RefSeq" id="XP_015137645.1">
    <property type="nucleotide sequence ID" value="XM_015282159.1"/>
</dbReference>
<dbReference type="RefSeq" id="XP_015137646.1">
    <property type="nucleotide sequence ID" value="XM_015282160.1"/>
</dbReference>
<dbReference type="RefSeq" id="XP_015137647.1">
    <molecule id="Q8QGH3-1"/>
    <property type="nucleotide sequence ID" value="XM_015282161.4"/>
</dbReference>
<dbReference type="RefSeq" id="XP_025002760.1">
    <molecule id="Q8QGH3-1"/>
    <property type="nucleotide sequence ID" value="XM_025146992.3"/>
</dbReference>
<dbReference type="PDB" id="1ZVN">
    <property type="method" value="X-ray"/>
    <property type="resolution" value="2.16 A"/>
    <property type="chains" value="A/B=60-156"/>
</dbReference>
<dbReference type="PDBsum" id="1ZVN"/>
<dbReference type="SMR" id="Q8QGH3"/>
<dbReference type="FunCoup" id="Q8QGH3">
    <property type="interactions" value="3"/>
</dbReference>
<dbReference type="STRING" id="9031.ENSGALP00000071272"/>
<dbReference type="GlyCosmos" id="Q8QGH3">
    <property type="glycosylation" value="5 sites, No reported glycans"/>
</dbReference>
<dbReference type="GlyGen" id="Q8QGH3">
    <property type="glycosylation" value="5 sites"/>
</dbReference>
<dbReference type="PaxDb" id="9031-ENSGALP00000021013"/>
<dbReference type="Ensembl" id="ENSGALT00010023237.1">
    <molecule id="Q8QGH3-1"/>
    <property type="protein sequence ID" value="ENSGALP00010013445.1"/>
    <property type="gene ID" value="ENSGALG00010009727.1"/>
</dbReference>
<dbReference type="GeneID" id="373927"/>
<dbReference type="KEGG" id="gga:373927"/>
<dbReference type="CTD" id="28316"/>
<dbReference type="VEuPathDB" id="HostDB:geneid_373927"/>
<dbReference type="eggNOG" id="KOG3594">
    <property type="taxonomic scope" value="Eukaryota"/>
</dbReference>
<dbReference type="GeneTree" id="ENSGT00940000158167"/>
<dbReference type="InParanoid" id="Q8QGH3"/>
<dbReference type="OMA" id="MSLYFCG"/>
<dbReference type="OrthoDB" id="6252479at2759"/>
<dbReference type="PhylomeDB" id="Q8QGH3"/>
<dbReference type="TreeFam" id="TF329887"/>
<dbReference type="EvolutionaryTrace" id="Q8QGH3"/>
<dbReference type="PRO" id="PR:Q8QGH3"/>
<dbReference type="Proteomes" id="UP000000539">
    <property type="component" value="Chromosome 2"/>
</dbReference>
<dbReference type="Bgee" id="ENSGALG00000012906">
    <property type="expression patterns" value="Expressed in cerebellum and 4 other cell types or tissues"/>
</dbReference>
<dbReference type="GO" id="GO:0005912">
    <property type="term" value="C:adherens junction"/>
    <property type="evidence" value="ECO:0000318"/>
    <property type="project" value="GO_Central"/>
</dbReference>
<dbReference type="GO" id="GO:0016342">
    <property type="term" value="C:catenin complex"/>
    <property type="evidence" value="ECO:0000318"/>
    <property type="project" value="GO_Central"/>
</dbReference>
<dbReference type="GO" id="GO:0008013">
    <property type="term" value="F:beta-catenin binding"/>
    <property type="evidence" value="ECO:0000318"/>
    <property type="project" value="GO_Central"/>
</dbReference>
<dbReference type="GO" id="GO:0045296">
    <property type="term" value="F:cadherin binding"/>
    <property type="evidence" value="ECO:0000318"/>
    <property type="project" value="GO_Central"/>
</dbReference>
<dbReference type="GO" id="GO:0005509">
    <property type="term" value="F:calcium ion binding"/>
    <property type="evidence" value="ECO:0007669"/>
    <property type="project" value="InterPro"/>
</dbReference>
<dbReference type="GO" id="GO:0034332">
    <property type="term" value="P:adherens junction organization"/>
    <property type="evidence" value="ECO:0000318"/>
    <property type="project" value="GO_Central"/>
</dbReference>
<dbReference type="GO" id="GO:0016339">
    <property type="term" value="P:calcium-dependent cell-cell adhesion via plasma membrane cell adhesion molecules"/>
    <property type="evidence" value="ECO:0000318"/>
    <property type="project" value="GO_Central"/>
</dbReference>
<dbReference type="GO" id="GO:0016477">
    <property type="term" value="P:cell migration"/>
    <property type="evidence" value="ECO:0000318"/>
    <property type="project" value="GO_Central"/>
</dbReference>
<dbReference type="GO" id="GO:0000902">
    <property type="term" value="P:cell morphogenesis"/>
    <property type="evidence" value="ECO:0000318"/>
    <property type="project" value="GO_Central"/>
</dbReference>
<dbReference type="GO" id="GO:0044331">
    <property type="term" value="P:cell-cell adhesion mediated by cadherin"/>
    <property type="evidence" value="ECO:0000318"/>
    <property type="project" value="GO_Central"/>
</dbReference>
<dbReference type="GO" id="GO:0007043">
    <property type="term" value="P:cell-cell junction assembly"/>
    <property type="evidence" value="ECO:0000318"/>
    <property type="project" value="GO_Central"/>
</dbReference>
<dbReference type="GO" id="GO:0007156">
    <property type="term" value="P:homophilic cell adhesion via plasma membrane adhesion molecules"/>
    <property type="evidence" value="ECO:0007669"/>
    <property type="project" value="InterPro"/>
</dbReference>
<dbReference type="CDD" id="cd11304">
    <property type="entry name" value="Cadherin_repeat"/>
    <property type="match status" value="5"/>
</dbReference>
<dbReference type="FunFam" id="4.10.900.10:FF:000001">
    <property type="entry name" value="Cadherin 2"/>
    <property type="match status" value="1"/>
</dbReference>
<dbReference type="FunFam" id="2.60.40.60:FF:000008">
    <property type="entry name" value="Cadherin 24"/>
    <property type="match status" value="1"/>
</dbReference>
<dbReference type="FunFam" id="2.60.40.60:FF:000009">
    <property type="entry name" value="Cadherin 24"/>
    <property type="match status" value="1"/>
</dbReference>
<dbReference type="FunFam" id="2.60.40.60:FF:000012">
    <property type="entry name" value="Cadherin 24"/>
    <property type="match status" value="1"/>
</dbReference>
<dbReference type="FunFam" id="2.60.40.60:FF:000017">
    <property type="entry name" value="Cadherin 24"/>
    <property type="match status" value="1"/>
</dbReference>
<dbReference type="FunFam" id="2.60.40.60:FF:000014">
    <property type="entry name" value="Cadherin 8"/>
    <property type="match status" value="1"/>
</dbReference>
<dbReference type="Gene3D" id="2.60.40.60">
    <property type="entry name" value="Cadherins"/>
    <property type="match status" value="5"/>
</dbReference>
<dbReference type="Gene3D" id="4.10.900.10">
    <property type="entry name" value="TCF3-CBD (Catenin binding domain)"/>
    <property type="match status" value="1"/>
</dbReference>
<dbReference type="InterPro" id="IPR039808">
    <property type="entry name" value="Cadherin"/>
</dbReference>
<dbReference type="InterPro" id="IPR002126">
    <property type="entry name" value="Cadherin-like_dom"/>
</dbReference>
<dbReference type="InterPro" id="IPR015919">
    <property type="entry name" value="Cadherin-like_sf"/>
</dbReference>
<dbReference type="InterPro" id="IPR020894">
    <property type="entry name" value="Cadherin_CS"/>
</dbReference>
<dbReference type="InterPro" id="IPR000233">
    <property type="entry name" value="Cadherin_Y-type_LIR"/>
</dbReference>
<dbReference type="InterPro" id="IPR027397">
    <property type="entry name" value="Catenin-bd_sf"/>
</dbReference>
<dbReference type="PANTHER" id="PTHR24027:SF84">
    <property type="entry name" value="CADHERIN-20"/>
    <property type="match status" value="1"/>
</dbReference>
<dbReference type="PANTHER" id="PTHR24027">
    <property type="entry name" value="CADHERIN-23"/>
    <property type="match status" value="1"/>
</dbReference>
<dbReference type="Pfam" id="PF01049">
    <property type="entry name" value="CADH_Y-type_LIR"/>
    <property type="match status" value="1"/>
</dbReference>
<dbReference type="Pfam" id="PF00028">
    <property type="entry name" value="Cadherin"/>
    <property type="match status" value="5"/>
</dbReference>
<dbReference type="PRINTS" id="PR00205">
    <property type="entry name" value="CADHERIN"/>
</dbReference>
<dbReference type="SMART" id="SM00112">
    <property type="entry name" value="CA"/>
    <property type="match status" value="5"/>
</dbReference>
<dbReference type="SUPFAM" id="SSF49313">
    <property type="entry name" value="Cadherin-like"/>
    <property type="match status" value="5"/>
</dbReference>
<dbReference type="PROSITE" id="PS00232">
    <property type="entry name" value="CADHERIN_1"/>
    <property type="match status" value="3"/>
</dbReference>
<dbReference type="PROSITE" id="PS50268">
    <property type="entry name" value="CADHERIN_2"/>
    <property type="match status" value="5"/>
</dbReference>
<sequence>MWTSGRMSNAKNLFGLGVSLYFWGLMDLTTTVLSGSARPLTEGPEDNLSDKLHQRMKRSWVWNQFFVLEEYTGTDPLYVGKLHSDMDRGDGSIKYILSGEGAGIVFTIDDTTGDIHAIQRLDREERSQYTLRAQALDRRTGRPMEPESEFIIKIQDINDNEPKFLDGPYVASVPEMSPVGTSVIQVTATDADDPTYGNSARVVYSILQGQPYFSVDSRTGLIRTALMNMDREAKEYYEVIVQAKDMGGQLGGLAGTTTVNITLSDVNDNPPRFPQKHYQMSVLESAPVSSTVGRVVAKDLDEGINAEMKYSLVDGDGLDVFDINTDPNYQVGIITVRKPLSFESKKSYTLKVEGANPHLEMRFLNLGPFRDTTTVHISVEDVDEPPVFEPSFYFVEVPEDVEIGATIQIISAKDPDVTNNSIRYSIDRSSDPGRFFYVDITSGALMTARPLDREDVSWHNITVLAMELNNPSQVGSVSVTVKVLDVNDNAPEFARFYEAFVCENAKAGQLIQTVSAIDRDDPQEGQHFYYSLAPEAANNPNFTLRDNQDNTAWILTRRSGFRQHEQNIFYLPILISDNGRPVLSSTGTLTVHVCSCDEGGMVMSCNAEAYVLPVSLSRGALIAILACIFVLLVLVLLILSMRRQRKQPYIIDEEENIHENIVRYDDEGGGEEDTEAFDIAAMWNPREAQLVVKNRQDMLPEIESLSRYVPQACIMDNNVHNYVLAKLYEADMDLWAPPFDSLQTYMFEGNGSVAESLSSLQSVTTDSDQSYDYLTDWGPRFKKLAEMYGATDSSGALW</sequence>
<evidence type="ECO:0000250" key="1"/>
<evidence type="ECO:0000255" key="2"/>
<evidence type="ECO:0000255" key="3">
    <source>
        <dbReference type="PROSITE-ProRule" id="PRU00043"/>
    </source>
</evidence>
<evidence type="ECO:0000269" key="4">
    <source>
    </source>
</evidence>
<evidence type="ECO:0000269" key="5">
    <source>
    </source>
</evidence>
<evidence type="ECO:0000269" key="6">
    <source>
    </source>
</evidence>
<evidence type="ECO:0000303" key="7">
    <source>
    </source>
</evidence>
<evidence type="ECO:0007829" key="8">
    <source>
        <dbReference type="PDB" id="1ZVN"/>
    </source>
</evidence>
<gene>
    <name type="primary">CDH20</name>
</gene>
<proteinExistence type="evidence at protein level"/>
<comment type="function">
    <text evidence="4 5 6">Cadherins are calcium-dependent cell adhesion proteins. They preferentially interact with themselves in a homophilic manner in connecting cells; cadherins may thus contribute to the sorting of heterogeneous cell types.</text>
</comment>
<comment type="subcellular location">
    <subcellularLocation>
        <location evidence="5">Cell membrane</location>
        <topology evidence="5">Single-pass type I membrane protein</topology>
    </subcellularLocation>
</comment>
<comment type="alternative products">
    <event type="alternative splicing"/>
    <isoform>
        <id>Q8QGH3-1</id>
        <name>1</name>
        <name>Long</name>
        <sequence type="displayed"/>
    </isoform>
    <isoform>
        <id>Q8QGH3-2</id>
        <name>2</name>
        <name>Short</name>
        <sequence type="described" ref="VSP_034199 VSP_034200"/>
    </isoform>
</comment>
<comment type="tissue specificity">
    <text evidence="4 5">Detected in embryonic spinal cord, in the brachial and lumbar section of motor neurons (at protein level). Detected in ventro-lateral portion of embryonic spinal cord, in the brachial and lumbar section of embryonic motor neurons. Detected in embryonic adductor motor neurons and embryonic dorsal root ganglion. Detected in the caudal half of newly generated somites and in presomitic mesoderm.</text>
</comment>
<comment type="domain">
    <text evidence="1">Three calcium ions are usually bound at the interface of each cadherin domain and rigidify the connections, imparting a strong curvature to the full-length ectodomain.</text>
</comment>
<feature type="signal peptide" evidence="2">
    <location>
        <begin position="1"/>
        <end position="35"/>
    </location>
</feature>
<feature type="propeptide" id="PRO_0000340243" evidence="2">
    <location>
        <begin position="36"/>
        <end position="58"/>
    </location>
</feature>
<feature type="chain" id="PRO_0000340244" description="Cadherin-20">
    <location>
        <begin position="59"/>
        <end position="798"/>
    </location>
</feature>
<feature type="topological domain" description="Extracellular" evidence="2">
    <location>
        <begin position="59"/>
        <end position="618"/>
    </location>
</feature>
<feature type="transmembrane region" description="Helical" evidence="2">
    <location>
        <begin position="619"/>
        <end position="639"/>
    </location>
</feature>
<feature type="topological domain" description="Cytoplasmic" evidence="2">
    <location>
        <begin position="640"/>
        <end position="798"/>
    </location>
</feature>
<feature type="domain" description="Cadherin 1" evidence="3">
    <location>
        <begin position="60"/>
        <end position="164"/>
    </location>
</feature>
<feature type="domain" description="Cadherin 2" evidence="3">
    <location>
        <begin position="165"/>
        <end position="273"/>
    </location>
</feature>
<feature type="domain" description="Cadherin 3" evidence="3">
    <location>
        <begin position="274"/>
        <end position="392"/>
    </location>
</feature>
<feature type="domain" description="Cadherin 4" evidence="3">
    <location>
        <begin position="389"/>
        <end position="493"/>
    </location>
</feature>
<feature type="domain" description="Cadherin 5" evidence="3">
    <location>
        <begin position="493"/>
        <end position="615"/>
    </location>
</feature>
<feature type="short sequence motif" description="Cell attachment site" evidence="2">
    <location>
        <begin position="88"/>
        <end position="90"/>
    </location>
</feature>
<feature type="glycosylation site" description="N-linked (GlcNAc...) asparagine" evidence="2">
    <location>
        <position position="47"/>
    </location>
</feature>
<feature type="glycosylation site" description="N-linked (GlcNAc...) asparagine" evidence="2">
    <location>
        <position position="260"/>
    </location>
</feature>
<feature type="glycosylation site" description="N-linked (GlcNAc...) asparagine" evidence="2">
    <location>
        <position position="419"/>
    </location>
</feature>
<feature type="glycosylation site" description="N-linked (GlcNAc...) asparagine" evidence="2">
    <location>
        <position position="460"/>
    </location>
</feature>
<feature type="glycosylation site" description="N-linked (GlcNAc...) asparagine" evidence="2">
    <location>
        <position position="541"/>
    </location>
</feature>
<feature type="splice variant" id="VSP_034199" description="In isoform 2." evidence="7">
    <location>
        <begin position="1"/>
        <end position="255"/>
    </location>
</feature>
<feature type="splice variant" id="VSP_034200" description="In isoform 2." evidence="7">
    <original>TTTVNITLSDVNDNPPRFPQK</original>
    <variation>MQFLVPFHSLLFCFSLLLVPE</variation>
    <location>
        <begin position="256"/>
        <end position="276"/>
    </location>
</feature>
<feature type="strand" evidence="8">
    <location>
        <begin position="64"/>
        <end position="68"/>
    </location>
</feature>
<feature type="helix" evidence="8">
    <location>
        <begin position="69"/>
        <end position="71"/>
    </location>
</feature>
<feature type="strand" evidence="8">
    <location>
        <begin position="73"/>
        <end position="75"/>
    </location>
</feature>
<feature type="strand" evidence="8">
    <location>
        <begin position="77"/>
        <end position="81"/>
    </location>
</feature>
<feature type="strand" evidence="8">
    <location>
        <begin position="89"/>
        <end position="91"/>
    </location>
</feature>
<feature type="strand" evidence="8">
    <location>
        <begin position="93"/>
        <end position="99"/>
    </location>
</feature>
<feature type="turn" evidence="8">
    <location>
        <begin position="103"/>
        <end position="105"/>
    </location>
</feature>
<feature type="strand" evidence="8">
    <location>
        <begin position="106"/>
        <end position="108"/>
    </location>
</feature>
<feature type="turn" evidence="8">
    <location>
        <begin position="110"/>
        <end position="112"/>
    </location>
</feature>
<feature type="strand" evidence="8">
    <location>
        <begin position="114"/>
        <end position="117"/>
    </location>
</feature>
<feature type="turn" evidence="8">
    <location>
        <begin position="123"/>
        <end position="125"/>
    </location>
</feature>
<feature type="strand" evidence="8">
    <location>
        <begin position="127"/>
        <end position="137"/>
    </location>
</feature>
<feature type="turn" evidence="8">
    <location>
        <begin position="138"/>
        <end position="140"/>
    </location>
</feature>
<feature type="strand" evidence="8">
    <location>
        <begin position="143"/>
        <end position="145"/>
    </location>
</feature>
<feature type="strand" evidence="8">
    <location>
        <begin position="148"/>
        <end position="155"/>
    </location>
</feature>
<accession>Q8QGH3</accession>
<accession>Q7ZYV7</accession>
<accession>Q804X8</accession>
<organism>
    <name type="scientific">Gallus gallus</name>
    <name type="common">Chicken</name>
    <dbReference type="NCBI Taxonomy" id="9031"/>
    <lineage>
        <taxon>Eukaryota</taxon>
        <taxon>Metazoa</taxon>
        <taxon>Chordata</taxon>
        <taxon>Craniata</taxon>
        <taxon>Vertebrata</taxon>
        <taxon>Euteleostomi</taxon>
        <taxon>Archelosauria</taxon>
        <taxon>Archosauria</taxon>
        <taxon>Dinosauria</taxon>
        <taxon>Saurischia</taxon>
        <taxon>Theropoda</taxon>
        <taxon>Coelurosauria</taxon>
        <taxon>Aves</taxon>
        <taxon>Neognathae</taxon>
        <taxon>Galloanserae</taxon>
        <taxon>Galliformes</taxon>
        <taxon>Phasianidae</taxon>
        <taxon>Phasianinae</taxon>
        <taxon>Gallus</taxon>
    </lineage>
</organism>